<sequence>MKSGRFIGVMSGTSLDGVDVVLAAIDETMVAQQASLTWPIPVHLKKGILDICQGQPLTLSQLGQLDTQLGRLFAQAVNALLAQQRLQPRDIVAIGCHGQTVWHEPTGEAPHTLQIGDNNHIVAHTGITVVGDFRRRDIALGGQGAPLVPAFHHALLGHPTEKRMVLNIGGIANLSLLFPGQAVRGYDTGPGNMLMDAWIWRQCAQPYDKDAAWAKEGQVILPLLQKMLRDPYFAASAPKSTGREYFNYGWLERHLTAFPGADARDVQATLAELTAVSIAQQVLLNGGCERLMVCGGGSRNPLVMARLAALLPGIEVSTTDKAGISGDDMEALAFAWLAWRTLAGLPGNLPSVTGATEASVLGAIYPANPITQS</sequence>
<reference key="1">
    <citation type="journal article" date="2011" name="J. Bacteriol.">
        <title>Comparative genomics of 28 Salmonella enterica isolates: evidence for CRISPR-mediated adaptive sublineage evolution.</title>
        <authorList>
            <person name="Fricke W.F."/>
            <person name="Mammel M.K."/>
            <person name="McDermott P.F."/>
            <person name="Tartera C."/>
            <person name="White D.G."/>
            <person name="Leclerc J.E."/>
            <person name="Ravel J."/>
            <person name="Cebula T.A."/>
        </authorList>
    </citation>
    <scope>NUCLEOTIDE SEQUENCE [LARGE SCALE GENOMIC DNA]</scope>
    <source>
        <strain>CVM19633</strain>
    </source>
</reference>
<organism>
    <name type="scientific">Salmonella schwarzengrund (strain CVM19633)</name>
    <dbReference type="NCBI Taxonomy" id="439843"/>
    <lineage>
        <taxon>Bacteria</taxon>
        <taxon>Pseudomonadati</taxon>
        <taxon>Pseudomonadota</taxon>
        <taxon>Gammaproteobacteria</taxon>
        <taxon>Enterobacterales</taxon>
        <taxon>Enterobacteriaceae</taxon>
        <taxon>Salmonella</taxon>
    </lineage>
</organism>
<protein>
    <recommendedName>
        <fullName evidence="1">Anhydro-N-acetylmuramic acid kinase</fullName>
        <ecNumber evidence="1">2.7.1.170</ecNumber>
    </recommendedName>
    <alternativeName>
        <fullName evidence="1">AnhMurNAc kinase</fullName>
    </alternativeName>
</protein>
<evidence type="ECO:0000255" key="1">
    <source>
        <dbReference type="HAMAP-Rule" id="MF_01270"/>
    </source>
</evidence>
<keyword id="KW-0067">ATP-binding</keyword>
<keyword id="KW-0119">Carbohydrate metabolism</keyword>
<keyword id="KW-0418">Kinase</keyword>
<keyword id="KW-0547">Nucleotide-binding</keyword>
<keyword id="KW-0808">Transferase</keyword>
<gene>
    <name evidence="1" type="primary">anmK</name>
    <name type="ordered locus">SeSA_A1543</name>
</gene>
<dbReference type="EC" id="2.7.1.170" evidence="1"/>
<dbReference type="EMBL" id="CP001127">
    <property type="protein sequence ID" value="ACF88992.1"/>
    <property type="molecule type" value="Genomic_DNA"/>
</dbReference>
<dbReference type="RefSeq" id="WP_000835021.1">
    <property type="nucleotide sequence ID" value="NC_011094.1"/>
</dbReference>
<dbReference type="SMR" id="B4TV05"/>
<dbReference type="KEGG" id="sew:SeSA_A1543"/>
<dbReference type="HOGENOM" id="CLU_038782_0_0_6"/>
<dbReference type="UniPathway" id="UPA00343"/>
<dbReference type="UniPathway" id="UPA00544"/>
<dbReference type="Proteomes" id="UP000001865">
    <property type="component" value="Chromosome"/>
</dbReference>
<dbReference type="GO" id="GO:0005524">
    <property type="term" value="F:ATP binding"/>
    <property type="evidence" value="ECO:0007669"/>
    <property type="project" value="UniProtKB-UniRule"/>
</dbReference>
<dbReference type="GO" id="GO:0016301">
    <property type="term" value="F:kinase activity"/>
    <property type="evidence" value="ECO:0007669"/>
    <property type="project" value="UniProtKB-KW"/>
</dbReference>
<dbReference type="GO" id="GO:0016773">
    <property type="term" value="F:phosphotransferase activity, alcohol group as acceptor"/>
    <property type="evidence" value="ECO:0007669"/>
    <property type="project" value="UniProtKB-UniRule"/>
</dbReference>
<dbReference type="GO" id="GO:0097175">
    <property type="term" value="P:1,6-anhydro-N-acetyl-beta-muramic acid catabolic process"/>
    <property type="evidence" value="ECO:0007669"/>
    <property type="project" value="UniProtKB-UniRule"/>
</dbReference>
<dbReference type="GO" id="GO:0006040">
    <property type="term" value="P:amino sugar metabolic process"/>
    <property type="evidence" value="ECO:0007669"/>
    <property type="project" value="InterPro"/>
</dbReference>
<dbReference type="GO" id="GO:0009254">
    <property type="term" value="P:peptidoglycan turnover"/>
    <property type="evidence" value="ECO:0007669"/>
    <property type="project" value="UniProtKB-UniRule"/>
</dbReference>
<dbReference type="CDD" id="cd24050">
    <property type="entry name" value="ASKHA_NBD_ANMK"/>
    <property type="match status" value="1"/>
</dbReference>
<dbReference type="Gene3D" id="3.30.420.40">
    <property type="match status" value="2"/>
</dbReference>
<dbReference type="HAMAP" id="MF_01270">
    <property type="entry name" value="AnhMurNAc_kinase"/>
    <property type="match status" value="1"/>
</dbReference>
<dbReference type="InterPro" id="IPR005338">
    <property type="entry name" value="Anhydro_N_Ac-Mur_kinase"/>
</dbReference>
<dbReference type="InterPro" id="IPR043129">
    <property type="entry name" value="ATPase_NBD"/>
</dbReference>
<dbReference type="NCBIfam" id="NF007138">
    <property type="entry name" value="PRK09585.1-1"/>
    <property type="match status" value="1"/>
</dbReference>
<dbReference type="NCBIfam" id="NF007139">
    <property type="entry name" value="PRK09585.1-3"/>
    <property type="match status" value="1"/>
</dbReference>
<dbReference type="NCBIfam" id="NF007148">
    <property type="entry name" value="PRK09585.3-2"/>
    <property type="match status" value="1"/>
</dbReference>
<dbReference type="PANTHER" id="PTHR30605">
    <property type="entry name" value="ANHYDRO-N-ACETYLMURAMIC ACID KINASE"/>
    <property type="match status" value="1"/>
</dbReference>
<dbReference type="PANTHER" id="PTHR30605:SF0">
    <property type="entry name" value="ANHYDRO-N-ACETYLMURAMIC ACID KINASE"/>
    <property type="match status" value="1"/>
</dbReference>
<dbReference type="Pfam" id="PF03702">
    <property type="entry name" value="AnmK"/>
    <property type="match status" value="1"/>
</dbReference>
<dbReference type="SUPFAM" id="SSF53067">
    <property type="entry name" value="Actin-like ATPase domain"/>
    <property type="match status" value="1"/>
</dbReference>
<proteinExistence type="inferred from homology"/>
<name>ANMK_SALSV</name>
<feature type="chain" id="PRO_1000140174" description="Anhydro-N-acetylmuramic acid kinase">
    <location>
        <begin position="1"/>
        <end position="373"/>
    </location>
</feature>
<feature type="binding site" evidence="1">
    <location>
        <begin position="12"/>
        <end position="19"/>
    </location>
    <ligand>
        <name>ATP</name>
        <dbReference type="ChEBI" id="CHEBI:30616"/>
    </ligand>
</feature>
<comment type="function">
    <text evidence="1">Catalyzes the specific phosphorylation of 1,6-anhydro-N-acetylmuramic acid (anhMurNAc) with the simultaneous cleavage of the 1,6-anhydro ring, generating MurNAc-6-P. Is required for the utilization of anhMurNAc either imported from the medium or derived from its own cell wall murein, and thus plays a role in cell wall recycling.</text>
</comment>
<comment type="catalytic activity">
    <reaction evidence="1">
        <text>1,6-anhydro-N-acetyl-beta-muramate + ATP + H2O = N-acetyl-D-muramate 6-phosphate + ADP + H(+)</text>
        <dbReference type="Rhea" id="RHEA:24952"/>
        <dbReference type="ChEBI" id="CHEBI:15377"/>
        <dbReference type="ChEBI" id="CHEBI:15378"/>
        <dbReference type="ChEBI" id="CHEBI:30616"/>
        <dbReference type="ChEBI" id="CHEBI:58690"/>
        <dbReference type="ChEBI" id="CHEBI:58722"/>
        <dbReference type="ChEBI" id="CHEBI:456216"/>
        <dbReference type="EC" id="2.7.1.170"/>
    </reaction>
</comment>
<comment type="pathway">
    <text evidence="1">Amino-sugar metabolism; 1,6-anhydro-N-acetylmuramate degradation.</text>
</comment>
<comment type="pathway">
    <text evidence="1">Cell wall biogenesis; peptidoglycan recycling.</text>
</comment>
<comment type="similarity">
    <text evidence="1">Belongs to the anhydro-N-acetylmuramic acid kinase family.</text>
</comment>
<accession>B4TV05</accession>